<accession>Q9ZJE9</accession>
<dbReference type="EC" id="2.7.7.7"/>
<dbReference type="EMBL" id="AE001439">
    <property type="protein sequence ID" value="AAD06938.1"/>
    <property type="molecule type" value="Genomic_DNA"/>
</dbReference>
<dbReference type="PIR" id="F71816">
    <property type="entry name" value="F71816"/>
</dbReference>
<dbReference type="RefSeq" id="WP_000437564.1">
    <property type="nucleotide sequence ID" value="NC_000921.1"/>
</dbReference>
<dbReference type="SMR" id="Q9ZJE9"/>
<dbReference type="KEGG" id="hpj:jhp_1363"/>
<dbReference type="PATRIC" id="fig|85963.30.peg.1188"/>
<dbReference type="eggNOG" id="COG0258">
    <property type="taxonomic scope" value="Bacteria"/>
</dbReference>
<dbReference type="eggNOG" id="COG0749">
    <property type="taxonomic scope" value="Bacteria"/>
</dbReference>
<dbReference type="Proteomes" id="UP000000804">
    <property type="component" value="Chromosome"/>
</dbReference>
<dbReference type="GO" id="GO:0008408">
    <property type="term" value="F:3'-5' exonuclease activity"/>
    <property type="evidence" value="ECO:0007669"/>
    <property type="project" value="InterPro"/>
</dbReference>
<dbReference type="GO" id="GO:0008409">
    <property type="term" value="F:5'-3' exonuclease activity"/>
    <property type="evidence" value="ECO:0007669"/>
    <property type="project" value="InterPro"/>
</dbReference>
<dbReference type="GO" id="GO:0003677">
    <property type="term" value="F:DNA binding"/>
    <property type="evidence" value="ECO:0007669"/>
    <property type="project" value="UniProtKB-KW"/>
</dbReference>
<dbReference type="GO" id="GO:0003887">
    <property type="term" value="F:DNA-directed DNA polymerase activity"/>
    <property type="evidence" value="ECO:0007669"/>
    <property type="project" value="UniProtKB-KW"/>
</dbReference>
<dbReference type="GO" id="GO:0006261">
    <property type="term" value="P:DNA-templated DNA replication"/>
    <property type="evidence" value="ECO:0007669"/>
    <property type="project" value="InterPro"/>
</dbReference>
<dbReference type="GO" id="GO:0006302">
    <property type="term" value="P:double-strand break repair"/>
    <property type="evidence" value="ECO:0007669"/>
    <property type="project" value="TreeGrafter"/>
</dbReference>
<dbReference type="CDD" id="cd08637">
    <property type="entry name" value="DNA_pol_A_pol_I_C"/>
    <property type="match status" value="1"/>
</dbReference>
<dbReference type="CDD" id="cd09898">
    <property type="entry name" value="H3TH_53EXO"/>
    <property type="match status" value="1"/>
</dbReference>
<dbReference type="CDD" id="cd09859">
    <property type="entry name" value="PIN_53EXO"/>
    <property type="match status" value="1"/>
</dbReference>
<dbReference type="FunFam" id="1.10.150.20:FF:000002">
    <property type="entry name" value="DNA polymerase I"/>
    <property type="match status" value="1"/>
</dbReference>
<dbReference type="FunFam" id="1.10.150.20:FF:000003">
    <property type="entry name" value="DNA polymerase I"/>
    <property type="match status" value="1"/>
</dbReference>
<dbReference type="FunFam" id="3.30.420.10:FF:000214">
    <property type="entry name" value="DNA polymerase I"/>
    <property type="match status" value="1"/>
</dbReference>
<dbReference type="FunFam" id="3.40.50.1010:FF:000095">
    <property type="entry name" value="DNA polymerase I"/>
    <property type="match status" value="1"/>
</dbReference>
<dbReference type="Gene3D" id="3.30.70.370">
    <property type="match status" value="1"/>
</dbReference>
<dbReference type="Gene3D" id="1.10.150.20">
    <property type="entry name" value="5' to 3' exonuclease, C-terminal subdomain"/>
    <property type="match status" value="2"/>
</dbReference>
<dbReference type="Gene3D" id="3.40.50.1010">
    <property type="entry name" value="5'-nuclease"/>
    <property type="match status" value="1"/>
</dbReference>
<dbReference type="Gene3D" id="3.30.420.10">
    <property type="entry name" value="Ribonuclease H-like superfamily/Ribonuclease H"/>
    <property type="match status" value="1"/>
</dbReference>
<dbReference type="Gene3D" id="1.20.1060.10">
    <property type="entry name" value="Taq DNA Polymerase, Chain T, domain 4"/>
    <property type="match status" value="1"/>
</dbReference>
<dbReference type="InterPro" id="IPR002562">
    <property type="entry name" value="3'-5'_exonuclease_dom"/>
</dbReference>
<dbReference type="InterPro" id="IPR020046">
    <property type="entry name" value="5-3_exonucl_a-hlix_arch_N"/>
</dbReference>
<dbReference type="InterPro" id="IPR002421">
    <property type="entry name" value="5-3_exonuclease"/>
</dbReference>
<dbReference type="InterPro" id="IPR036279">
    <property type="entry name" value="5-3_exonuclease_C_sf"/>
</dbReference>
<dbReference type="InterPro" id="IPR019760">
    <property type="entry name" value="DNA-dir_DNA_pol_A_CS"/>
</dbReference>
<dbReference type="InterPro" id="IPR001098">
    <property type="entry name" value="DNA-dir_DNA_pol_A_palm_dom"/>
</dbReference>
<dbReference type="InterPro" id="IPR043502">
    <property type="entry name" value="DNA/RNA_pol_sf"/>
</dbReference>
<dbReference type="InterPro" id="IPR020045">
    <property type="entry name" value="DNA_polI_H3TH"/>
</dbReference>
<dbReference type="InterPro" id="IPR018320">
    <property type="entry name" value="DNA_polymerase_1"/>
</dbReference>
<dbReference type="InterPro" id="IPR002298">
    <property type="entry name" value="DNA_polymerase_A"/>
</dbReference>
<dbReference type="InterPro" id="IPR008918">
    <property type="entry name" value="HhH2"/>
</dbReference>
<dbReference type="InterPro" id="IPR029060">
    <property type="entry name" value="PIN-like_dom_sf"/>
</dbReference>
<dbReference type="InterPro" id="IPR012337">
    <property type="entry name" value="RNaseH-like_sf"/>
</dbReference>
<dbReference type="InterPro" id="IPR036397">
    <property type="entry name" value="RNaseH_sf"/>
</dbReference>
<dbReference type="NCBIfam" id="TIGR00593">
    <property type="entry name" value="pola"/>
    <property type="match status" value="1"/>
</dbReference>
<dbReference type="NCBIfam" id="NF004397">
    <property type="entry name" value="PRK05755.1"/>
    <property type="match status" value="1"/>
</dbReference>
<dbReference type="PANTHER" id="PTHR10133">
    <property type="entry name" value="DNA POLYMERASE I"/>
    <property type="match status" value="1"/>
</dbReference>
<dbReference type="PANTHER" id="PTHR10133:SF27">
    <property type="entry name" value="DNA POLYMERASE NU"/>
    <property type="match status" value="1"/>
</dbReference>
<dbReference type="Pfam" id="PF01367">
    <property type="entry name" value="5_3_exonuc"/>
    <property type="match status" value="1"/>
</dbReference>
<dbReference type="Pfam" id="PF02739">
    <property type="entry name" value="5_3_exonuc_N"/>
    <property type="match status" value="1"/>
</dbReference>
<dbReference type="Pfam" id="PF00476">
    <property type="entry name" value="DNA_pol_A"/>
    <property type="match status" value="1"/>
</dbReference>
<dbReference type="PRINTS" id="PR00868">
    <property type="entry name" value="DNAPOLI"/>
</dbReference>
<dbReference type="SMART" id="SM00474">
    <property type="entry name" value="35EXOc"/>
    <property type="match status" value="1"/>
</dbReference>
<dbReference type="SMART" id="SM00475">
    <property type="entry name" value="53EXOc"/>
    <property type="match status" value="1"/>
</dbReference>
<dbReference type="SMART" id="SM00279">
    <property type="entry name" value="HhH2"/>
    <property type="match status" value="1"/>
</dbReference>
<dbReference type="SMART" id="SM00482">
    <property type="entry name" value="POLAc"/>
    <property type="match status" value="1"/>
</dbReference>
<dbReference type="SUPFAM" id="SSF47807">
    <property type="entry name" value="5' to 3' exonuclease, C-terminal subdomain"/>
    <property type="match status" value="1"/>
</dbReference>
<dbReference type="SUPFAM" id="SSF56672">
    <property type="entry name" value="DNA/RNA polymerases"/>
    <property type="match status" value="1"/>
</dbReference>
<dbReference type="SUPFAM" id="SSF88723">
    <property type="entry name" value="PIN domain-like"/>
    <property type="match status" value="1"/>
</dbReference>
<dbReference type="SUPFAM" id="SSF53098">
    <property type="entry name" value="Ribonuclease H-like"/>
    <property type="match status" value="1"/>
</dbReference>
<dbReference type="PROSITE" id="PS00447">
    <property type="entry name" value="DNA_POLYMERASE_A"/>
    <property type="match status" value="1"/>
</dbReference>
<organism>
    <name type="scientific">Helicobacter pylori (strain J99 / ATCC 700824)</name>
    <name type="common">Campylobacter pylori J99</name>
    <dbReference type="NCBI Taxonomy" id="85963"/>
    <lineage>
        <taxon>Bacteria</taxon>
        <taxon>Pseudomonadati</taxon>
        <taxon>Campylobacterota</taxon>
        <taxon>Epsilonproteobacteria</taxon>
        <taxon>Campylobacterales</taxon>
        <taxon>Helicobacteraceae</taxon>
        <taxon>Helicobacter</taxon>
    </lineage>
</organism>
<reference key="1">
    <citation type="journal article" date="1999" name="Nature">
        <title>Genomic sequence comparison of two unrelated isolates of the human gastric pathogen Helicobacter pylori.</title>
        <authorList>
            <person name="Alm R.A."/>
            <person name="Ling L.-S.L."/>
            <person name="Moir D.T."/>
            <person name="King B.L."/>
            <person name="Brown E.D."/>
            <person name="Doig P.C."/>
            <person name="Smith D.R."/>
            <person name="Noonan B."/>
            <person name="Guild B.C."/>
            <person name="deJonge B.L."/>
            <person name="Carmel G."/>
            <person name="Tummino P.J."/>
            <person name="Caruso A."/>
            <person name="Uria-Nickelsen M."/>
            <person name="Mills D.M."/>
            <person name="Ives C."/>
            <person name="Gibson R."/>
            <person name="Merberg D."/>
            <person name="Mills S.D."/>
            <person name="Jiang Q."/>
            <person name="Taylor D.E."/>
            <person name="Vovis G.F."/>
            <person name="Trust T.J."/>
        </authorList>
    </citation>
    <scope>NUCLEOTIDE SEQUENCE [LARGE SCALE GENOMIC DNA]</scope>
    <source>
        <strain>J99 / ATCC 700824</strain>
    </source>
</reference>
<gene>
    <name type="primary">polA</name>
    <name type="ordered locus">jhp_1363</name>
</gene>
<proteinExistence type="inferred from homology"/>
<comment type="function">
    <text evidence="1">In addition to polymerase activity, this DNA polymerase exhibits 3'-5' and 5'-3' exonuclease activity.</text>
</comment>
<comment type="catalytic activity">
    <reaction>
        <text>DNA(n) + a 2'-deoxyribonucleoside 5'-triphosphate = DNA(n+1) + diphosphate</text>
        <dbReference type="Rhea" id="RHEA:22508"/>
        <dbReference type="Rhea" id="RHEA-COMP:17339"/>
        <dbReference type="Rhea" id="RHEA-COMP:17340"/>
        <dbReference type="ChEBI" id="CHEBI:33019"/>
        <dbReference type="ChEBI" id="CHEBI:61560"/>
        <dbReference type="ChEBI" id="CHEBI:173112"/>
        <dbReference type="EC" id="2.7.7.7"/>
    </reaction>
</comment>
<comment type="subunit">
    <text>Single-chain monomer with multiple functions.</text>
</comment>
<comment type="similarity">
    <text evidence="2">Belongs to the DNA polymerase type-A family.</text>
</comment>
<name>DPO1_HELPJ</name>
<sequence>MEQPVIKEGTLALIDTFAYLFRSYYMSAKNKPLTNDKGFPTGLLTGLVGMVKKFYKDRKNMPFIVFALESQTKTKRAEKLGEYKQNRKDAPKEMLLQIPIALEWLQKMGFTCVEVGGFEADDVIASLATLSPYKTRIYSKDKDFNQLLSDKIALFDGKTEFLAKDCVEKYGILPSQFTDYQGIVGDSSDNYKGVKGIGSKNAKELLQRLGSLEKIYENLDLAKNLLSPKMYQALIQDKGSAFLSKELATLERGCIKEFDFLSCAFPSENPLLKIKDELKEYGFISTLRDLENSPFIVENVPILNSTPILDNTPALDNAPKKSRMIVLESAEPLSMFLEKLENPNARVFMRLVLDKDKKILALAFLLQDQGYFLPLEEALFSPFSLEFLQNAFSQMLQHACIIGHDLKPLLSFLKAKYQVPLENIRIQDTQILAFLKNPEKVGFDEVLKEYLKEDLIPHEKIKDFKTKSKAEKSELLSMELNALKRLCEYFEKGGLEEDLLTLARDIETPFVKVLMGMEFQGFKIDAPYFKRLEQEFKNELNVLERQILDLIGVDFNLNSPKQLGEVLYDKLGLPKNKSHSTDEKNLLKILDKHPSIPLILEYRELNKLFNTYTTPLLRLKDKDDKIHTTFIQTGTATGRLSSHSPNLQNIPVRSPKGLLIRKGFIASSKEYCLLGVDYSQIELRLLAHFSQDKDLMEAFLKGRDIHLETSKALFGEDLAKEKRSIAKSINFGLVYGMGSKKLSETLSIPLSEAKSYIEAYFKRFPSIKDYLNGMREEILKTSKAFTLLGRYRVFDFTGVNDYVKGNYLREGVNAIFQGSASDLLKLGMLKVSERFKNNPSVRLLLQVHDELIFEIEEKNAPELQQEIQRILNDEVYPLRVPLETSAFIAKRWNELKG</sequence>
<evidence type="ECO:0000250" key="1"/>
<evidence type="ECO:0000305" key="2"/>
<protein>
    <recommendedName>
        <fullName>DNA polymerase I</fullName>
        <shortName>POL I</shortName>
        <ecNumber>2.7.7.7</ecNumber>
    </recommendedName>
</protein>
<feature type="chain" id="PRO_0000101242" description="DNA polymerase I">
    <location>
        <begin position="1"/>
        <end position="897"/>
    </location>
</feature>
<feature type="domain" description="5'-3' exonuclease">
    <location>
        <begin position="1"/>
        <end position="317"/>
    </location>
</feature>
<feature type="domain" description="3'-5' exonuclease">
    <location>
        <begin position="318"/>
        <end position="494"/>
    </location>
</feature>
<feature type="region of interest" description="Polymerase">
    <location>
        <begin position="498"/>
        <end position="896"/>
    </location>
</feature>
<keyword id="KW-0227">DNA damage</keyword>
<keyword id="KW-0234">DNA repair</keyword>
<keyword id="KW-0235">DNA replication</keyword>
<keyword id="KW-0238">DNA-binding</keyword>
<keyword id="KW-0239">DNA-directed DNA polymerase</keyword>
<keyword id="KW-0269">Exonuclease</keyword>
<keyword id="KW-0378">Hydrolase</keyword>
<keyword id="KW-0540">Nuclease</keyword>
<keyword id="KW-0548">Nucleotidyltransferase</keyword>
<keyword id="KW-0808">Transferase</keyword>